<accession>P84780</accession>
<sequence length="36" mass="3708">DKCSPSGAICSGFGPPEQCCSGACVPHPILRIFVCQ</sequence>
<dbReference type="SMR" id="P84780"/>
<dbReference type="MEROPS" id="I90.002"/>
<dbReference type="Proteomes" id="UP001155700">
    <property type="component" value="Unplaced"/>
</dbReference>
<dbReference type="GO" id="GO:0004867">
    <property type="term" value="F:serine-type endopeptidase inhibitor activity"/>
    <property type="evidence" value="ECO:0007669"/>
    <property type="project" value="UniProtKB-KW"/>
</dbReference>
<dbReference type="InterPro" id="IPR040875">
    <property type="entry name" value="Tryp_inh"/>
</dbReference>
<dbReference type="Pfam" id="PF17983">
    <property type="entry name" value="Tryp_inh"/>
    <property type="match status" value="1"/>
</dbReference>
<reference evidence="4" key="1">
    <citation type="journal article" date="2007" name="Phytochemistry">
        <title>Trypsin inhibitors from the garden four o'clock (Mirabilis jalapa) and spinach (Spinacia oleracea) seeds: isolation, characterization and chemical synthesis.</title>
        <authorList>
            <person name="Kowalska J."/>
            <person name="Pszczola K."/>
            <person name="Wilimowska-Pelc A."/>
            <person name="Lorenc-Kubis I."/>
            <person name="Zuziak E."/>
            <person name="Lugowski M."/>
            <person name="Legowska A."/>
            <person name="Kwiatkowska A."/>
            <person name="Sleszynska M."/>
            <person name="Lesner A."/>
            <person name="Walewska A."/>
            <person name="Zablotna E."/>
            <person name="Rolka K."/>
            <person name="Wilusz T."/>
        </authorList>
    </citation>
    <scope>PROTEIN SEQUENCE</scope>
    <scope>FUNCTION</scope>
    <scope>MASS SPECTROMETRY</scope>
    <source>
        <tissue evidence="3">Seed</tissue>
    </source>
</reference>
<keyword id="KW-0903">Direct protein sequencing</keyword>
<keyword id="KW-1015">Disulfide bond</keyword>
<keyword id="KW-0960">Knottin</keyword>
<keyword id="KW-0646">Protease inhibitor</keyword>
<keyword id="KW-1185">Reference proteome</keyword>
<keyword id="KW-0722">Serine protease inhibitor</keyword>
<organism>
    <name type="scientific">Spinacia oleracea</name>
    <name type="common">Spinach</name>
    <dbReference type="NCBI Taxonomy" id="3562"/>
    <lineage>
        <taxon>Eukaryota</taxon>
        <taxon>Viridiplantae</taxon>
        <taxon>Streptophyta</taxon>
        <taxon>Embryophyta</taxon>
        <taxon>Tracheophyta</taxon>
        <taxon>Spermatophyta</taxon>
        <taxon>Magnoliopsida</taxon>
        <taxon>eudicotyledons</taxon>
        <taxon>Gunneridae</taxon>
        <taxon>Pentapetalae</taxon>
        <taxon>Caryophyllales</taxon>
        <taxon>Chenopodiaceae</taxon>
        <taxon>Chenopodioideae</taxon>
        <taxon>Anserineae</taxon>
        <taxon>Spinacia</taxon>
    </lineage>
</organism>
<evidence type="ECO:0000250" key="1"/>
<evidence type="ECO:0000250" key="2">
    <source>
        <dbReference type="UniProtKB" id="P84779"/>
    </source>
</evidence>
<evidence type="ECO:0000269" key="3">
    <source>
    </source>
</evidence>
<evidence type="ECO:0000305" key="4"/>
<protein>
    <recommendedName>
        <fullName>Trypsin inhibitor 2</fullName>
    </recommendedName>
    <alternativeName>
        <fullName>SOTI II</fullName>
    </alternativeName>
    <alternativeName>
        <fullName>Trypsin inhibitor II</fullName>
    </alternativeName>
</protein>
<comment type="function">
    <text evidence="3">Trypsin inhibitor.</text>
</comment>
<comment type="domain">
    <text evidence="1">The presence of a 'disulfide through disulfide knot' structurally defines this protein as a knottin.</text>
</comment>
<comment type="mass spectrometry" mass="3709.2" method="Electrospray" evidence="3"/>
<comment type="similarity">
    <text evidence="3">Belongs to the Mirabilis serine proteinase inhibitor family.</text>
</comment>
<name>ITR2_SPIOL</name>
<proteinExistence type="evidence at protein level"/>
<feature type="peptide" id="PRO_0000292938" description="Trypsin inhibitor 2">
    <location>
        <begin position="1"/>
        <end position="36"/>
    </location>
</feature>
<feature type="site" description="Reactive bond for trypsin" evidence="2">
    <location>
        <begin position="31"/>
        <end position="32"/>
    </location>
</feature>
<feature type="disulfide bond" evidence="2">
    <location>
        <begin position="3"/>
        <end position="20"/>
    </location>
</feature>
<feature type="disulfide bond" evidence="2">
    <location>
        <begin position="10"/>
        <end position="24"/>
    </location>
</feature>
<feature type="disulfide bond" evidence="2">
    <location>
        <begin position="19"/>
        <end position="35"/>
    </location>
</feature>